<protein>
    <recommendedName>
        <fullName evidence="1">NAD(P)H-quinone oxidoreductase subunit 2 A, chloroplastic</fullName>
        <ecNumber evidence="1">7.1.1.-</ecNumber>
    </recommendedName>
    <alternativeName>
        <fullName evidence="1">NAD(P)H dehydrogenase, subunit 2 A</fullName>
    </alternativeName>
    <alternativeName>
        <fullName evidence="1">NADH-plastoquinone oxidoreductase subunit 2 A</fullName>
    </alternativeName>
</protein>
<organism>
    <name type="scientific">Daucus carota</name>
    <name type="common">Wild carrot</name>
    <dbReference type="NCBI Taxonomy" id="4039"/>
    <lineage>
        <taxon>Eukaryota</taxon>
        <taxon>Viridiplantae</taxon>
        <taxon>Streptophyta</taxon>
        <taxon>Embryophyta</taxon>
        <taxon>Tracheophyta</taxon>
        <taxon>Spermatophyta</taxon>
        <taxon>Magnoliopsida</taxon>
        <taxon>eudicotyledons</taxon>
        <taxon>Gunneridae</taxon>
        <taxon>Pentapetalae</taxon>
        <taxon>asterids</taxon>
        <taxon>campanulids</taxon>
        <taxon>Apiales</taxon>
        <taxon>Apiaceae</taxon>
        <taxon>Apioideae</taxon>
        <taxon>Scandiceae</taxon>
        <taxon>Daucinae</taxon>
        <taxon>Daucus</taxon>
        <taxon>Daucus sect. Daucus</taxon>
    </lineage>
</organism>
<reference key="1">
    <citation type="journal article" date="2006" name="BMC Genomics">
        <title>Complete plastid genome sequence of Daucus carota: implications for biotechnology and phylogeny of angiosperms.</title>
        <authorList>
            <person name="Ruhlman T."/>
            <person name="Lee S.-B."/>
            <person name="Jansen R.K."/>
            <person name="Hostetler J.B."/>
            <person name="Tallon L.J."/>
            <person name="Town C.D."/>
            <person name="Daniell H."/>
        </authorList>
    </citation>
    <scope>NUCLEOTIDE SEQUENCE [LARGE SCALE GENOMIC DNA]</scope>
    <source>
        <strain>cv. Danvers Half-long</strain>
    </source>
</reference>
<comment type="function">
    <text evidence="1">NDH shuttles electrons from NAD(P)H:plastoquinone, via FMN and iron-sulfur (Fe-S) centers, to quinones in the photosynthetic chain and possibly in a chloroplast respiratory chain. The immediate electron acceptor for the enzyme in this species is believed to be plastoquinone. Couples the redox reaction to proton translocation, and thus conserves the redox energy in a proton gradient.</text>
</comment>
<comment type="catalytic activity">
    <reaction evidence="1">
        <text>a plastoquinone + NADH + (n+1) H(+)(in) = a plastoquinol + NAD(+) + n H(+)(out)</text>
        <dbReference type="Rhea" id="RHEA:42608"/>
        <dbReference type="Rhea" id="RHEA-COMP:9561"/>
        <dbReference type="Rhea" id="RHEA-COMP:9562"/>
        <dbReference type="ChEBI" id="CHEBI:15378"/>
        <dbReference type="ChEBI" id="CHEBI:17757"/>
        <dbReference type="ChEBI" id="CHEBI:57540"/>
        <dbReference type="ChEBI" id="CHEBI:57945"/>
        <dbReference type="ChEBI" id="CHEBI:62192"/>
    </reaction>
</comment>
<comment type="catalytic activity">
    <reaction evidence="1">
        <text>a plastoquinone + NADPH + (n+1) H(+)(in) = a plastoquinol + NADP(+) + n H(+)(out)</text>
        <dbReference type="Rhea" id="RHEA:42612"/>
        <dbReference type="Rhea" id="RHEA-COMP:9561"/>
        <dbReference type="Rhea" id="RHEA-COMP:9562"/>
        <dbReference type="ChEBI" id="CHEBI:15378"/>
        <dbReference type="ChEBI" id="CHEBI:17757"/>
        <dbReference type="ChEBI" id="CHEBI:57783"/>
        <dbReference type="ChEBI" id="CHEBI:58349"/>
        <dbReference type="ChEBI" id="CHEBI:62192"/>
    </reaction>
</comment>
<comment type="subunit">
    <text evidence="1">NDH is composed of at least 16 different subunits, 5 of which are encoded in the nucleus.</text>
</comment>
<comment type="subcellular location">
    <subcellularLocation>
        <location evidence="1">Plastid</location>
        <location evidence="1">Chloroplast thylakoid membrane</location>
        <topology evidence="1">Multi-pass membrane protein</topology>
    </subcellularLocation>
</comment>
<comment type="similarity">
    <text evidence="1">Belongs to the complex I subunit 2 family.</text>
</comment>
<keyword id="KW-0150">Chloroplast</keyword>
<keyword id="KW-0472">Membrane</keyword>
<keyword id="KW-0520">NAD</keyword>
<keyword id="KW-0521">NADP</keyword>
<keyword id="KW-0934">Plastid</keyword>
<keyword id="KW-0618">Plastoquinone</keyword>
<keyword id="KW-0874">Quinone</keyword>
<keyword id="KW-0793">Thylakoid</keyword>
<keyword id="KW-1278">Translocase</keyword>
<keyword id="KW-0812">Transmembrane</keyword>
<keyword id="KW-1133">Transmembrane helix</keyword>
<keyword id="KW-0813">Transport</keyword>
<proteinExistence type="inferred from homology"/>
<sequence length="510" mass="56588">MIWHVQNENFILDSTRIFMKAFHLLLFDGSLIVPECILIFGLILLLMIDSTSDQKDIPWLYFISSTSLVMSITALLFRWREEPVISFSGNFQTNNFNEIFQFLILLCSTLCIPLSVEYIECTEMAITEFLLFVLTATLGGMFLCGANDLITIFVAPECFSLCSYLLSGYTKKDVRSNEATMKYLLMGGASSSILVHGFSWLYGSSGGEIELQEIVNGLINTQMYNSPGISIALIFITVGIGFKLSPAPSHQWTPDVYEGSPTPVVAFLSVTSKVAASASATRIFDIPFYFSSNEWHLLLETLAILSMILGNLIAITQTSMKRMLAYSSIGQIGYVIIGIIVGDSNDGYASMITYMLFYISMNLGTFACIVLFGLRTGTDNIRDYAGLYTKDPFLALSLALCLLSLGGLPPLAGFFGKLYLFWCGWQAGLYFLVLIGLLTSVVSIYYYLKIIKLLMTGRTQEITPHVRNYRRSPFRSNNSIELSMIVCVIASTIPGISMNPIIAIAQDTLF</sequence>
<accession>P0CC54</accession>
<accession>Q0G9Q2</accession>
<feature type="chain" id="PRO_0000275594" description="NAD(P)H-quinone oxidoreductase subunit 2 A, chloroplastic">
    <location>
        <begin position="1"/>
        <end position="510"/>
    </location>
</feature>
<feature type="transmembrane region" description="Helical" evidence="1">
    <location>
        <begin position="24"/>
        <end position="44"/>
    </location>
</feature>
<feature type="transmembrane region" description="Helical" evidence="1">
    <location>
        <begin position="57"/>
        <end position="77"/>
    </location>
</feature>
<feature type="transmembrane region" description="Helical" evidence="1">
    <location>
        <begin position="99"/>
        <end position="119"/>
    </location>
</feature>
<feature type="transmembrane region" description="Helical" evidence="1">
    <location>
        <begin position="124"/>
        <end position="144"/>
    </location>
</feature>
<feature type="transmembrane region" description="Helical" evidence="1">
    <location>
        <begin position="149"/>
        <end position="169"/>
    </location>
</feature>
<feature type="transmembrane region" description="Helical" evidence="1">
    <location>
        <begin position="183"/>
        <end position="203"/>
    </location>
</feature>
<feature type="transmembrane region" description="Helical" evidence="1">
    <location>
        <begin position="227"/>
        <end position="247"/>
    </location>
</feature>
<feature type="transmembrane region" description="Helical" evidence="1">
    <location>
        <begin position="295"/>
        <end position="315"/>
    </location>
</feature>
<feature type="transmembrane region" description="Helical" evidence="1">
    <location>
        <begin position="323"/>
        <end position="343"/>
    </location>
</feature>
<feature type="transmembrane region" description="Helical" evidence="1">
    <location>
        <begin position="354"/>
        <end position="374"/>
    </location>
</feature>
<feature type="transmembrane region" description="Helical" evidence="1">
    <location>
        <begin position="395"/>
        <end position="415"/>
    </location>
</feature>
<feature type="transmembrane region" description="Helical" evidence="1">
    <location>
        <begin position="418"/>
        <end position="438"/>
    </location>
</feature>
<feature type="transmembrane region" description="Helical" evidence="1">
    <location>
        <begin position="484"/>
        <end position="504"/>
    </location>
</feature>
<gene>
    <name evidence="1" type="primary">ndhB1</name>
</gene>
<geneLocation type="chloroplast"/>
<evidence type="ECO:0000255" key="1">
    <source>
        <dbReference type="HAMAP-Rule" id="MF_00445"/>
    </source>
</evidence>
<name>NU2C1_DAUCA</name>
<dbReference type="EC" id="7.1.1.-" evidence="1"/>
<dbReference type="EMBL" id="DQ898156">
    <property type="protein sequence ID" value="ABI32468.1"/>
    <property type="molecule type" value="Genomic_DNA"/>
</dbReference>
<dbReference type="SMR" id="P0CC54"/>
<dbReference type="GO" id="GO:0009535">
    <property type="term" value="C:chloroplast thylakoid membrane"/>
    <property type="evidence" value="ECO:0007669"/>
    <property type="project" value="UniProtKB-SubCell"/>
</dbReference>
<dbReference type="GO" id="GO:0008137">
    <property type="term" value="F:NADH dehydrogenase (ubiquinone) activity"/>
    <property type="evidence" value="ECO:0007669"/>
    <property type="project" value="InterPro"/>
</dbReference>
<dbReference type="GO" id="GO:0048038">
    <property type="term" value="F:quinone binding"/>
    <property type="evidence" value="ECO:0007669"/>
    <property type="project" value="UniProtKB-KW"/>
</dbReference>
<dbReference type="GO" id="GO:0042773">
    <property type="term" value="P:ATP synthesis coupled electron transport"/>
    <property type="evidence" value="ECO:0007669"/>
    <property type="project" value="InterPro"/>
</dbReference>
<dbReference type="GO" id="GO:0019684">
    <property type="term" value="P:photosynthesis, light reaction"/>
    <property type="evidence" value="ECO:0007669"/>
    <property type="project" value="UniProtKB-UniRule"/>
</dbReference>
<dbReference type="HAMAP" id="MF_00445">
    <property type="entry name" value="NDH1_NuoN_1"/>
    <property type="match status" value="1"/>
</dbReference>
<dbReference type="InterPro" id="IPR010096">
    <property type="entry name" value="NADH-Q_OxRdtase_suN/2"/>
</dbReference>
<dbReference type="InterPro" id="IPR001750">
    <property type="entry name" value="ND/Mrp_TM"/>
</dbReference>
<dbReference type="InterPro" id="IPR045693">
    <property type="entry name" value="Ndh2_N"/>
</dbReference>
<dbReference type="NCBIfam" id="TIGR01770">
    <property type="entry name" value="NDH_I_N"/>
    <property type="match status" value="1"/>
</dbReference>
<dbReference type="NCBIfam" id="NF002701">
    <property type="entry name" value="PRK02504.1"/>
    <property type="match status" value="1"/>
</dbReference>
<dbReference type="PANTHER" id="PTHR22773">
    <property type="entry name" value="NADH DEHYDROGENASE"/>
    <property type="match status" value="1"/>
</dbReference>
<dbReference type="Pfam" id="PF19530">
    <property type="entry name" value="Ndh2_N"/>
    <property type="match status" value="1"/>
</dbReference>
<dbReference type="Pfam" id="PF00361">
    <property type="entry name" value="Proton_antipo_M"/>
    <property type="match status" value="1"/>
</dbReference>
<dbReference type="PRINTS" id="PR01434">
    <property type="entry name" value="NADHDHGNASE5"/>
</dbReference>